<sequence length="391" mass="42204">MKKTVRSLCSTALALTLGFTLLSGPASVQAAGNADYNLAGFSQGNTGGGIISESNTSTYKKVYNATDLALALKKNSGVKVVEIMNDLDLGWNEIPSAAQTSPFAKHNDALTHPVLKQTGVSKITVDGFNGLTIFSANGSKIKHAAITVKRSSNVIIRNLEFDELWEWDESTKGDYDKNDWDYITLEDSSGVWIDHCTFNKAYDGLVDSKKGTSGVTISWSTFKGDDGSANSWVTRQINELEANKASYPMYNYLRSSAVGLSKQDVIAISGPQKKGHLVGATSLESANANLSITLHHNLYKDIQDRMPRLRGGNAHAYNIIMDAADARSAQSRITSAMATAIASKGYKFGITSNGAISTESGAVLVEKSVIKDVQXPCTQQSDRSDQRHVHR</sequence>
<proteinExistence type="evidence at protein level"/>
<gene>
    <name evidence="4" type="primary">pelB</name>
</gene>
<protein>
    <recommendedName>
        <fullName evidence="4">Pectate lyase B</fullName>
        <ecNumber evidence="3">4.2.2.2</ecNumber>
    </recommendedName>
    <alternativeName>
        <fullName evidence="6">Pectin lyase</fullName>
        <ecNumber evidence="3">4.2.2.10</ecNumber>
    </alternativeName>
</protein>
<name>PLYB_PAEAM</name>
<evidence type="ECO:0000250" key="1">
    <source>
        <dbReference type="UniProtKB" id="P39116"/>
    </source>
</evidence>
<evidence type="ECO:0000255" key="2"/>
<evidence type="ECO:0000269" key="3">
    <source>
    </source>
</evidence>
<evidence type="ECO:0000303" key="4">
    <source>
    </source>
</evidence>
<evidence type="ECO:0000305" key="5"/>
<evidence type="ECO:0000305" key="6">
    <source>
    </source>
</evidence>
<accession>D3JTC2</accession>
<keyword id="KW-0106">Calcium</keyword>
<keyword id="KW-0119">Carbohydrate metabolism</keyword>
<keyword id="KW-0456">Lyase</keyword>
<keyword id="KW-0479">Metal-binding</keyword>
<keyword id="KW-0624">Polysaccharide degradation</keyword>
<keyword id="KW-0964">Secreted</keyword>
<keyword id="KW-0732">Signal</keyword>
<reference key="1">
    <citation type="journal article" date="2010" name="Appl. Environ. Microbiol.">
        <title>Characterization of two Paenibacillus amylolyticus strain 27C64 pectate lyases with activity on highly methylated pectin.</title>
        <authorList>
            <person name="Boland W.E."/>
            <person name="Henriksen E.D."/>
            <person name="Doran-Peterson J."/>
        </authorList>
    </citation>
    <scope>NUCLEOTIDE SEQUENCE [GENOMIC DNA]</scope>
    <scope>FUNCTION</scope>
    <scope>CATALYTIC ACTIVITY</scope>
    <scope>COFACTOR</scope>
    <scope>SUBSTRATE SPECIFICITY</scope>
    <scope>BIOPHYSICOCHEMICAL PROPERTIES</scope>
    <scope>SUBCELLULAR LOCATION</scope>
    <scope>PATHWAY</scope>
    <source>
        <strain>27C64</strain>
    </source>
</reference>
<comment type="function">
    <text evidence="3">Catalyzes the depolymerization of both polygalacturonate and pectins of various methyl esterification degree, with an endo mode of action. Shows the highest activity on 20 to 34% methylated pectin but retains 67%, 51%, 25%, and 1% of its maximum activity on polygalacturonate and 8.5%, 55 to 70%, and 90% methylated pectin, respectively.</text>
</comment>
<comment type="catalytic activity">
    <reaction evidence="3">
        <text>Eliminative cleavage of (1-&gt;4)-alpha-D-galacturonan to give oligosaccharides with 4-deoxy-alpha-D-galact-4-enuronosyl groups at their non-reducing ends.</text>
        <dbReference type="EC" id="4.2.2.2"/>
    </reaction>
</comment>
<comment type="catalytic activity">
    <reaction evidence="3">
        <text>Eliminative cleavage of (1-&gt;4)-alpha-D-galacturonan methyl ester to give oligosaccharides with 4-deoxy-6-O-methyl-alpha-D-galact-4-enuronosyl groups at their non-reducing ends.</text>
        <dbReference type="EC" id="4.2.2.10"/>
    </reaction>
</comment>
<comment type="cofactor">
    <cofactor evidence="3">
        <name>Ca(2+)</name>
        <dbReference type="ChEBI" id="CHEBI:29108"/>
    </cofactor>
</comment>
<comment type="biophysicochemical properties">
    <phDependence>
        <text evidence="3">Optimum pH is 9.5.</text>
    </phDependence>
    <temperatureDependence>
        <text evidence="3">Optimum temperature is 40 degrees Celsius.</text>
    </temperatureDependence>
</comment>
<comment type="pathway">
    <text evidence="3">Glycan metabolism; pectin degradation.</text>
</comment>
<comment type="subcellular location">
    <subcellularLocation>
        <location evidence="3">Secreted</location>
    </subcellularLocation>
</comment>
<comment type="similarity">
    <text evidence="5">Belongs to the polysaccharide lyase 1 family.</text>
</comment>
<feature type="signal peptide" evidence="2">
    <location>
        <begin position="1"/>
        <end position="30"/>
    </location>
</feature>
<feature type="chain" id="PRO_5003047262" description="Pectate lyase B">
    <location>
        <begin position="31"/>
        <end position="391"/>
    </location>
</feature>
<feature type="active site" evidence="1 6">
    <location>
        <position position="305"/>
    </location>
</feature>
<feature type="binding site" evidence="1 6">
    <location>
        <position position="181"/>
    </location>
    <ligand>
        <name>Ca(2+)</name>
        <dbReference type="ChEBI" id="CHEBI:29108"/>
    </ligand>
</feature>
<feature type="binding site" evidence="1 6">
    <location>
        <position position="203"/>
    </location>
    <ligand>
        <name>Ca(2+)</name>
        <dbReference type="ChEBI" id="CHEBI:29108"/>
    </ligand>
</feature>
<feature type="binding site" evidence="1 6">
    <location>
        <position position="207"/>
    </location>
    <ligand>
        <name>Ca(2+)</name>
        <dbReference type="ChEBI" id="CHEBI:29108"/>
    </ligand>
</feature>
<organism>
    <name type="scientific">Paenibacillus amylolyticus</name>
    <dbReference type="NCBI Taxonomy" id="1451"/>
    <lineage>
        <taxon>Bacteria</taxon>
        <taxon>Bacillati</taxon>
        <taxon>Bacillota</taxon>
        <taxon>Bacilli</taxon>
        <taxon>Bacillales</taxon>
        <taxon>Paenibacillaceae</taxon>
        <taxon>Paenibacillus</taxon>
    </lineage>
</organism>
<dbReference type="EC" id="4.2.2.2" evidence="3"/>
<dbReference type="EC" id="4.2.2.10" evidence="3"/>
<dbReference type="EMBL" id="GU289920">
    <property type="protein sequence ID" value="ADB78775.1"/>
    <property type="molecule type" value="Genomic_DNA"/>
</dbReference>
<dbReference type="CAZy" id="PL1">
    <property type="family name" value="Polysaccharide Lyase Family 1"/>
</dbReference>
<dbReference type="BRENDA" id="4.2.2.2">
    <property type="organism ID" value="632"/>
</dbReference>
<dbReference type="UniPathway" id="UPA00545"/>
<dbReference type="GO" id="GO:0005576">
    <property type="term" value="C:extracellular region"/>
    <property type="evidence" value="ECO:0007669"/>
    <property type="project" value="UniProtKB-SubCell"/>
</dbReference>
<dbReference type="GO" id="GO:0005509">
    <property type="term" value="F:calcium ion binding"/>
    <property type="evidence" value="ECO:0000314"/>
    <property type="project" value="UniProtKB"/>
</dbReference>
<dbReference type="GO" id="GO:0030570">
    <property type="term" value="F:pectate lyase activity"/>
    <property type="evidence" value="ECO:0000314"/>
    <property type="project" value="UniProtKB"/>
</dbReference>
<dbReference type="GO" id="GO:0047490">
    <property type="term" value="F:pectin lyase activity"/>
    <property type="evidence" value="ECO:0000314"/>
    <property type="project" value="UniProtKB"/>
</dbReference>
<dbReference type="GO" id="GO:0045490">
    <property type="term" value="P:pectin catabolic process"/>
    <property type="evidence" value="ECO:0000314"/>
    <property type="project" value="UniProtKB"/>
</dbReference>
<dbReference type="Gene3D" id="2.160.20.10">
    <property type="entry name" value="Single-stranded right-handed beta-helix, Pectin lyase-like"/>
    <property type="match status" value="1"/>
</dbReference>
<dbReference type="InterPro" id="IPR002022">
    <property type="entry name" value="Pec_lyase"/>
</dbReference>
<dbReference type="InterPro" id="IPR012334">
    <property type="entry name" value="Pectin_lyas_fold"/>
</dbReference>
<dbReference type="InterPro" id="IPR011050">
    <property type="entry name" value="Pectin_lyase_fold/virulence"/>
</dbReference>
<dbReference type="InterPro" id="IPR045032">
    <property type="entry name" value="PEL"/>
</dbReference>
<dbReference type="PANTHER" id="PTHR31683">
    <property type="entry name" value="PECTATE LYASE 18-RELATED"/>
    <property type="match status" value="1"/>
</dbReference>
<dbReference type="PANTHER" id="PTHR31683:SF18">
    <property type="entry name" value="PECTATE LYASE 21-RELATED"/>
    <property type="match status" value="1"/>
</dbReference>
<dbReference type="Pfam" id="PF00544">
    <property type="entry name" value="Pectate_lyase_4"/>
    <property type="match status" value="2"/>
</dbReference>
<dbReference type="SMART" id="SM00656">
    <property type="entry name" value="Amb_all"/>
    <property type="match status" value="1"/>
</dbReference>
<dbReference type="SUPFAM" id="SSF51126">
    <property type="entry name" value="Pectin lyase-like"/>
    <property type="match status" value="1"/>
</dbReference>